<evidence type="ECO:0000269" key="1">
    <source>
    </source>
</evidence>
<evidence type="ECO:0000269" key="2">
    <source>
    </source>
</evidence>
<evidence type="ECO:0000269" key="3">
    <source>
    </source>
</evidence>
<evidence type="ECO:0000303" key="4">
    <source>
    </source>
</evidence>
<evidence type="ECO:0000303" key="5">
    <source>
    </source>
</evidence>
<evidence type="ECO:0000305" key="6"/>
<evidence type="ECO:0000305" key="7">
    <source>
    </source>
</evidence>
<evidence type="ECO:0000305" key="8">
    <source>
    </source>
</evidence>
<evidence type="ECO:0000312" key="9">
    <source>
        <dbReference type="EMBL" id="AAO76820.1"/>
    </source>
</evidence>
<evidence type="ECO:0007744" key="10">
    <source>
        <dbReference type="PDB" id="3E81"/>
    </source>
</evidence>
<evidence type="ECO:0007744" key="11">
    <source>
        <dbReference type="PDB" id="3E84"/>
    </source>
</evidence>
<evidence type="ECO:0007744" key="12">
    <source>
        <dbReference type="PDB" id="3E8M"/>
    </source>
</evidence>
<evidence type="ECO:0007744" key="13">
    <source>
        <dbReference type="PDB" id="4HGO"/>
    </source>
</evidence>
<evidence type="ECO:0007744" key="14">
    <source>
        <dbReference type="PDB" id="4HGQ"/>
    </source>
</evidence>
<evidence type="ECO:0007744" key="15">
    <source>
        <dbReference type="PDB" id="4HGR"/>
    </source>
</evidence>
<evidence type="ECO:0007829" key="16">
    <source>
        <dbReference type="PDB" id="3E8M"/>
    </source>
</evidence>
<sequence>MKEIKLILTDIDGVWTDGGMFYDQTGNEWKKFNTSDSAGIFWAHNKGIPVGILTGEKTEIVRRRAEKLKVDYLFQGVVDKLSAAEELCNELGINLEQVAYIGDDLNDAKLLKRVGIAGVPASAPFYIRRLSTIFLEKRGGEGVFREFVEKVLGINLEDFIAVIQ</sequence>
<organism>
    <name type="scientific">Bacteroides thetaiotaomicron (strain ATCC 29148 / DSM 2079 / JCM 5827 / CCUG 10774 / NCTC 10582 / VPI-5482 / E50)</name>
    <dbReference type="NCBI Taxonomy" id="226186"/>
    <lineage>
        <taxon>Bacteria</taxon>
        <taxon>Pseudomonadati</taxon>
        <taxon>Bacteroidota</taxon>
        <taxon>Bacteroidia</taxon>
        <taxon>Bacteroidales</taxon>
        <taxon>Bacteroidaceae</taxon>
        <taxon>Bacteroides</taxon>
    </lineage>
</organism>
<proteinExistence type="evidence at protein level"/>
<accession>Q8A712</accession>
<feature type="chain" id="PRO_0000443723" description="2-keto-3-deoxy-D-glycero-D-galacto-9-phosphonononic acid phosphatase">
    <location>
        <begin position="1"/>
        <end position="164"/>
    </location>
</feature>
<feature type="binding site" evidence="2 3 11 13 14 15">
    <location>
        <position position="10"/>
    </location>
    <ligand>
        <name>Mg(2+)</name>
        <dbReference type="ChEBI" id="CHEBI:18420"/>
    </ligand>
</feature>
<feature type="binding site" evidence="2 3 11 13 14 15">
    <location>
        <position position="12"/>
    </location>
    <ligand>
        <name>Mg(2+)</name>
        <dbReference type="ChEBI" id="CHEBI:18420"/>
    </ligand>
</feature>
<feature type="binding site" evidence="7 8 10 12 13">
    <location>
        <position position="34"/>
    </location>
    <ligand>
        <name>substrate</name>
    </ligand>
</feature>
<feature type="binding site" evidence="7 8 10 11 13">
    <location>
        <begin position="54"/>
        <end position="56"/>
    </location>
    <ligand>
        <name>substrate</name>
    </ligand>
</feature>
<feature type="binding site" evidence="7 8 10 12 13">
    <location>
        <begin position="64"/>
        <end position="67"/>
    </location>
    <ligand>
        <name>substrate</name>
    </ligand>
</feature>
<feature type="binding site" evidence="7 8 10 11 13">
    <location>
        <position position="80"/>
    </location>
    <ligand>
        <name>substrate</name>
    </ligand>
</feature>
<feature type="binding site" evidence="2 3 11 13 14 15">
    <location>
        <position position="103"/>
    </location>
    <ligand>
        <name>Mg(2+)</name>
        <dbReference type="ChEBI" id="CHEBI:18420"/>
    </ligand>
</feature>
<feature type="binding site" evidence="7 10 11">
    <location>
        <position position="106"/>
    </location>
    <ligand>
        <name>substrate</name>
    </ligand>
</feature>
<feature type="mutagenesis site" description="13-fold decrease of the catalytic efficiency and 4-fold decrease of the affinity for 2-keto-3-deoxy-D-glycero-D-galacto-9-phosphonononic acid (KDN-9-P)." evidence="2">
    <original>T</original>
    <variation>A</variation>
    <location>
        <position position="34"/>
    </location>
</feature>
<feature type="mutagenesis site" description="2-fold decrease of the affinity for 2-keto-3-deoxy-D-glycero-D-galacto-9-phosphonononic acid (KDN-9-P)." evidence="2">
    <original>S</original>
    <variation>A</variation>
    <location>
        <position position="37"/>
    </location>
</feature>
<feature type="mutagenesis site" description="Strong decrease of the catalytic efficiency and 4-fold decrease of the affinity for 2-keto-3-deoxy-D-glycero-D-galacto-9-phosphonononic acid (KDN-9-P). Displays a 46-fold decrease in the catalytic efficiency and 25-fold decrease of the affinity with 2-keto-3-deoxy-D-glycero-D-galacto-9-phosphonononic acid (KDN-9-P) as substrate, however with 2-keto-3-deoxy-D-manno-octulosonate-8-phosphate (KDO-8-P) serving as substrate the catalytic efficiency and affinity are almost unchanged. Displays a 300-fold decrease of the catalytic efficiency and an unchanged affinity with 2-keto-3-deoxy-D-glycero-D-galacto-9-phosphonononic acid (KDN-9-P) as substrate, however with 2-keto-3-deoxy-D-manno-octulosonate-8-phosphate (KDO-8-P) serving as substrate the catalytic efficiency and affinity are almost unchanged; when associated with A-67." evidence="2 3">
    <original>E</original>
    <variation>A</variation>
    <location>
        <position position="56"/>
    </location>
</feature>
<feature type="mutagenesis site" description="Loss of phosphatase activity." evidence="2">
    <original>R</original>
    <variation>A</variation>
    <location>
        <position position="64"/>
    </location>
</feature>
<feature type="mutagenesis site" description="Displays a 300-fold decrease of the catalytic efficiency and an unchanged affinity with 2-keto-3-deoxy-D-glycero-D-galacto-9-phosphonononic acid (KDN-9-P) as substrate, however with 2-keto-3-deoxy-D-manno-octulosonate-8-phosphate (KDO-8-P) serving as substrate the catalytic efficiency and affinity are almost unchanged; when associated with A-56." evidence="2">
    <original>K</original>
    <variation>A</variation>
    <location>
        <position position="67"/>
    </location>
</feature>
<feature type="strand" evidence="16">
    <location>
        <begin position="6"/>
        <end position="9"/>
    </location>
</feature>
<feature type="turn" evidence="16">
    <location>
        <begin position="12"/>
        <end position="14"/>
    </location>
</feature>
<feature type="strand" evidence="16">
    <location>
        <begin position="15"/>
        <end position="22"/>
    </location>
</feature>
<feature type="strand" evidence="16">
    <location>
        <begin position="24"/>
        <end position="26"/>
    </location>
</feature>
<feature type="strand" evidence="16">
    <location>
        <begin position="28"/>
        <end position="33"/>
    </location>
</feature>
<feature type="helix" evidence="16">
    <location>
        <begin position="34"/>
        <end position="36"/>
    </location>
</feature>
<feature type="helix" evidence="16">
    <location>
        <begin position="37"/>
        <end position="45"/>
    </location>
</feature>
<feature type="strand" evidence="16">
    <location>
        <begin position="50"/>
        <end position="53"/>
    </location>
</feature>
<feature type="helix" evidence="16">
    <location>
        <begin position="59"/>
        <end position="67"/>
    </location>
</feature>
<feature type="strand" evidence="16">
    <location>
        <begin position="71"/>
        <end position="74"/>
    </location>
</feature>
<feature type="helix" evidence="16">
    <location>
        <begin position="80"/>
        <end position="91"/>
    </location>
</feature>
<feature type="helix" evidence="16">
    <location>
        <begin position="95"/>
        <end position="97"/>
    </location>
</feature>
<feature type="strand" evidence="16">
    <location>
        <begin position="98"/>
        <end position="101"/>
    </location>
</feature>
<feature type="helix" evidence="16">
    <location>
        <begin position="105"/>
        <end position="107"/>
    </location>
</feature>
<feature type="helix" evidence="16">
    <location>
        <begin position="108"/>
        <end position="111"/>
    </location>
</feature>
<feature type="strand" evidence="16">
    <location>
        <begin position="114"/>
        <end position="118"/>
    </location>
</feature>
<feature type="helix" evidence="16">
    <location>
        <begin position="125"/>
        <end position="128"/>
    </location>
</feature>
<feature type="turn" evidence="16">
    <location>
        <begin position="139"/>
        <end position="142"/>
    </location>
</feature>
<feature type="helix" evidence="16">
    <location>
        <begin position="143"/>
        <end position="151"/>
    </location>
</feature>
<feature type="helix" evidence="16">
    <location>
        <begin position="156"/>
        <end position="162"/>
    </location>
</feature>
<keyword id="KW-0002">3D-structure</keyword>
<keyword id="KW-0378">Hydrolase</keyword>
<keyword id="KW-0460">Magnesium</keyword>
<keyword id="KW-0479">Metal-binding</keyword>
<keyword id="KW-1185">Reference proteome</keyword>
<reference key="1">
    <citation type="journal article" date="2003" name="Science">
        <title>A genomic view of the human-Bacteroides thetaiotaomicron symbiosis.</title>
        <authorList>
            <person name="Xu J."/>
            <person name="Bjursell M.K."/>
            <person name="Himrod J."/>
            <person name="Deng S."/>
            <person name="Carmichael L.K."/>
            <person name="Chiang H.C."/>
            <person name="Hooper L.V."/>
            <person name="Gordon J.I."/>
        </authorList>
    </citation>
    <scope>NUCLEOTIDE SEQUENCE [LARGE SCALE GENOMIC DNA]</scope>
    <source>
        <strain>ATCC 29148 / DSM 2079 / JCM 5827 / CCUG 10774 / NCTC 10582 / VPI-5482 / E50</strain>
    </source>
</reference>
<reference key="2">
    <citation type="journal article" date="2009" name="Proc. Natl. Acad. Sci. U.S.A.">
        <title>Characterizing a model human gut microbiota composed of members of its two dominant bacterial phyla.</title>
        <authorList>
            <person name="Mahowald M.A."/>
            <person name="Rey F.E."/>
            <person name="Seedorf H."/>
            <person name="Turnbaugh P.J."/>
            <person name="Fulton R.S."/>
            <person name="Wollam A."/>
            <person name="Shah N."/>
            <person name="Wang C."/>
            <person name="Magrini V."/>
            <person name="Wilson R.K."/>
            <person name="Cantarel B.L."/>
            <person name="Coutinho P.M."/>
            <person name="Henrissat B."/>
            <person name="Crock L.W."/>
            <person name="Russell A."/>
            <person name="Verberkmoes N.C."/>
            <person name="Hettich R.L."/>
            <person name="Gordon J.I."/>
        </authorList>
    </citation>
    <scope>NUCLEOTIDE SEQUENCE [LARGE SCALE GENOMIC DNA]</scope>
    <source>
        <strain>ATCC 29148 / DSM 2079 / JCM 5827 / CCUG 10774 / NCTC 10582 / VPI-5482 / E50</strain>
    </source>
</reference>
<reference key="3">
    <citation type="journal article" date="2008" name="Chem. Biol.">
        <title>Human symbiont Bacteroides thetaiotaomicron synthesizes 2-keto-3-deoxy-D-glycero-D-galacto-nononic acid (KDN).</title>
        <authorList>
            <person name="Wang L."/>
            <person name="Lu Z."/>
            <person name="Allen K.N."/>
            <person name="Mariano P.S."/>
            <person name="Dunaway-Mariano D."/>
        </authorList>
    </citation>
    <scope>FUNCTION</scope>
    <scope>CATALYTIC ACTIVITY</scope>
    <scope>BIOPHYSICOCHEMICAL PROPERTIES</scope>
    <scope>SUBSTRATE SPECIFICITY</scope>
</reference>
<reference key="4">
    <citation type="journal article" date="2009" name="J. Biol. Chem.">
        <title>Structure-function analysis of 2-keto-3-deoxy-D-glycero-D-galactonononate-9-phosphate phosphatase defines specificity elements in type C0 haloalkanoate dehalogenase family members.</title>
        <authorList>
            <person name="Lu Z."/>
            <person name="Wang L."/>
            <person name="Dunaway-Mariano D."/>
            <person name="Allen K.N."/>
        </authorList>
    </citation>
    <scope>X-RAY CRYSTALLOGRAPHY (1.10 ANGSTROMS) IN COMPLEX WITH SUBSTRATE ANALOG AND MAGNESIUM IONS</scope>
    <scope>FUNCTION</scope>
    <scope>CATALYTIC ACTIVITY</scope>
    <scope>BIOPHYSICOCHEMICAL PROPERTIES</scope>
    <scope>MUTAGENESIS OF THR-34; SER-37; GLU-56 AND ARG-64</scope>
    <scope>COFACTOR</scope>
    <scope>SUBSTRATE SPECIFICITY</scope>
    <scope>SUBUNIT</scope>
</reference>
<reference key="5">
    <citation type="journal article" date="2013" name="Biochemistry">
        <title>Structural basis for the divergence of substrate specificity and biological function within HAD phosphatases in lipopolysaccharide and sialic acid biosynthesis.</title>
        <authorList>
            <person name="Daughtry K.D."/>
            <person name="Huang H."/>
            <person name="Malashkevich V."/>
            <person name="Patskovsky Y."/>
            <person name="Liu W."/>
            <person name="Ramagopal U."/>
            <person name="Sauder J.M."/>
            <person name="Burley S.K."/>
            <person name="Almo S.C."/>
            <person name="Dunaway-Mariano D."/>
            <person name="Allen K.N."/>
        </authorList>
    </citation>
    <scope>X-RAY CRYSTALLOGRAPHY (2.05 ANGSTROMS) OF WILD-TYPE AND DOUBLE MUTANTS ALA-56/ALA-67 IN COMPLEX WITH SUBSTRATE ANALOG AND MAGNESIUM IONS</scope>
    <scope>FUNCTION</scope>
    <scope>CATALYTIC ACTIVITY</scope>
    <scope>BIOPHYSICOCHEMICAL PROPERTIES</scope>
    <scope>MUTAGENESIS OF GLU-56 AND LYS-67</scope>
    <scope>COFACTOR</scope>
    <scope>SUBSTRATE SPECIFICITY</scope>
    <scope>SUBUNIT</scope>
</reference>
<dbReference type="EC" id="3.1.3.103" evidence="1 2 3"/>
<dbReference type="EMBL" id="AE015928">
    <property type="protein sequence ID" value="AAO76820.1"/>
    <property type="molecule type" value="Genomic_DNA"/>
</dbReference>
<dbReference type="RefSeq" id="NP_810626.1">
    <property type="nucleotide sequence ID" value="NC_004663.1"/>
</dbReference>
<dbReference type="RefSeq" id="WP_008767822.1">
    <property type="nucleotide sequence ID" value="NZ_UYXG01000034.1"/>
</dbReference>
<dbReference type="PDB" id="3E81">
    <property type="method" value="X-ray"/>
    <property type="resolution" value="1.63 A"/>
    <property type="chains" value="A/B/C/D=1-164"/>
</dbReference>
<dbReference type="PDB" id="3E84">
    <property type="method" value="X-ray"/>
    <property type="resolution" value="1.85 A"/>
    <property type="chains" value="A/B/C/D=1-164"/>
</dbReference>
<dbReference type="PDB" id="3E8M">
    <property type="method" value="X-ray"/>
    <property type="resolution" value="1.10 A"/>
    <property type="chains" value="A/B/C/D=1-164"/>
</dbReference>
<dbReference type="PDB" id="4HGO">
    <property type="method" value="X-ray"/>
    <property type="resolution" value="2.10 A"/>
    <property type="chains" value="A/B/C/D=1-164"/>
</dbReference>
<dbReference type="PDB" id="4HGQ">
    <property type="method" value="X-ray"/>
    <property type="resolution" value="2.28 A"/>
    <property type="chains" value="A/B/C/D/E/F/G/H=1-164"/>
</dbReference>
<dbReference type="PDB" id="4HGR">
    <property type="method" value="X-ray"/>
    <property type="resolution" value="2.05 A"/>
    <property type="chains" value="A/B/C/D/E/F/G/H=1-164"/>
</dbReference>
<dbReference type="PDBsum" id="3E81"/>
<dbReference type="PDBsum" id="3E84"/>
<dbReference type="PDBsum" id="3E8M"/>
<dbReference type="PDBsum" id="4HGO"/>
<dbReference type="PDBsum" id="4HGQ"/>
<dbReference type="PDBsum" id="4HGR"/>
<dbReference type="SMR" id="Q8A712"/>
<dbReference type="STRING" id="226186.BT_1713"/>
<dbReference type="PaxDb" id="226186-BT_1713"/>
<dbReference type="EnsemblBacteria" id="AAO76820">
    <property type="protein sequence ID" value="AAO76820"/>
    <property type="gene ID" value="BT_1713"/>
</dbReference>
<dbReference type="KEGG" id="bth:BT_1713"/>
<dbReference type="PATRIC" id="fig|226186.12.peg.1756"/>
<dbReference type="eggNOG" id="COG1778">
    <property type="taxonomic scope" value="Bacteria"/>
</dbReference>
<dbReference type="HOGENOM" id="CLU_106694_1_0_10"/>
<dbReference type="InParanoid" id="Q8A712"/>
<dbReference type="OrthoDB" id="9805604at2"/>
<dbReference type="BioCyc" id="MetaCyc:MONOMER-14548"/>
<dbReference type="BRENDA" id="3.1.3.103">
    <property type="organism ID" value="709"/>
</dbReference>
<dbReference type="EvolutionaryTrace" id="Q8A712"/>
<dbReference type="Proteomes" id="UP000001414">
    <property type="component" value="Chromosome"/>
</dbReference>
<dbReference type="GO" id="GO:0016788">
    <property type="term" value="F:hydrolase activity, acting on ester bonds"/>
    <property type="evidence" value="ECO:0007669"/>
    <property type="project" value="InterPro"/>
</dbReference>
<dbReference type="GO" id="GO:0046872">
    <property type="term" value="F:metal ion binding"/>
    <property type="evidence" value="ECO:0007669"/>
    <property type="project" value="UniProtKB-KW"/>
</dbReference>
<dbReference type="CDD" id="cd01630">
    <property type="entry name" value="HAD_KDO-like"/>
    <property type="match status" value="1"/>
</dbReference>
<dbReference type="FunFam" id="3.40.50.1000:FF:000029">
    <property type="entry name" value="3-deoxy-D-manno-octulosonate 8-phosphate phosphatase KdsC"/>
    <property type="match status" value="1"/>
</dbReference>
<dbReference type="Gene3D" id="3.40.50.1000">
    <property type="entry name" value="HAD superfamily/HAD-like"/>
    <property type="match status" value="1"/>
</dbReference>
<dbReference type="InterPro" id="IPR050793">
    <property type="entry name" value="CMP-NeuNAc_synthase"/>
</dbReference>
<dbReference type="InterPro" id="IPR036412">
    <property type="entry name" value="HAD-like_sf"/>
</dbReference>
<dbReference type="InterPro" id="IPR006549">
    <property type="entry name" value="HAD-SF_hydro_IIIA"/>
</dbReference>
<dbReference type="InterPro" id="IPR023214">
    <property type="entry name" value="HAD_sf"/>
</dbReference>
<dbReference type="InterPro" id="IPR010023">
    <property type="entry name" value="KdsC_fam"/>
</dbReference>
<dbReference type="NCBIfam" id="TIGR01662">
    <property type="entry name" value="HAD-SF-IIIA"/>
    <property type="match status" value="1"/>
</dbReference>
<dbReference type="NCBIfam" id="TIGR01670">
    <property type="entry name" value="KdsC-phosphatas"/>
    <property type="match status" value="1"/>
</dbReference>
<dbReference type="PANTHER" id="PTHR21485">
    <property type="entry name" value="HAD SUPERFAMILY MEMBERS CMAS AND KDSC"/>
    <property type="match status" value="1"/>
</dbReference>
<dbReference type="PANTHER" id="PTHR21485:SF3">
    <property type="entry name" value="N-ACYLNEURAMINATE CYTIDYLYLTRANSFERASE"/>
    <property type="match status" value="1"/>
</dbReference>
<dbReference type="Pfam" id="PF00702">
    <property type="entry name" value="Hydrolase"/>
    <property type="match status" value="1"/>
</dbReference>
<dbReference type="PIRSF" id="PIRSF006118">
    <property type="entry name" value="KDO8-P_Ptase"/>
    <property type="match status" value="1"/>
</dbReference>
<dbReference type="SFLD" id="SFLDG01138">
    <property type="entry name" value="C1.6.2:_Deoxy-d-mannose-octulo"/>
    <property type="match status" value="1"/>
</dbReference>
<dbReference type="SFLD" id="SFLDG01136">
    <property type="entry name" value="C1.6:_Phosphoserine_Phosphatas"/>
    <property type="match status" value="1"/>
</dbReference>
<dbReference type="SUPFAM" id="SSF56784">
    <property type="entry name" value="HAD-like"/>
    <property type="match status" value="1"/>
</dbReference>
<gene>
    <name evidence="9" type="ordered locus">BT_1713</name>
</gene>
<protein>
    <recommendedName>
        <fullName evidence="4">2-keto-3-deoxy-D-glycero-D-galacto-9-phosphonononic acid phosphatase</fullName>
        <shortName evidence="4">KDN-9-P phosphatase</shortName>
        <ecNumber evidence="1 2 3">3.1.3.103</ecNumber>
    </recommendedName>
    <alternativeName>
        <fullName evidence="5">2-keto-3-deoxy-D-glycero-D-galacto-nonic acid-9-phosphate phosphatase</fullName>
        <shortName evidence="5">KDN9PP</shortName>
    </alternativeName>
    <alternativeName>
        <fullName evidence="6">3-deoxy-D-glycero-D-galacto-nonulopyranosonate 9-phosphatase</fullName>
    </alternativeName>
</protein>
<name>KDGGP_BACTN</name>
<comment type="function">
    <text evidence="1 2 3">Involved in the biosynthesis of 2-keto-3-deoxy-D-glycero-D-galacto-nononic acid used in cell-wall polysaccharides (PubMed:18804026). Catalyzes the hydrolysis of 2-keto-3-deoxy-D-glycero-D-galacto-9-phosphonononic acid (KDN-9-P) to yield 2-keto-3-deoxy-D-glycero-D-galacto-nononic acid (KDN) (PubMed:18804026, PubMed:18986982, PubMed:23848398). Also able to hydrolyze N-acetylneuraminate-9-phosphate (Neu5NAc-9-P), 2-keto-3-deoxy-D-manno-octulosonate-8-phosphate (KDO-8-P), phosphoenolpyruvate (PEP), gluconate 6-phosphate, tyrosine phosphate ester and glucose-6-P as substrate (PubMed:18804026, PubMed:18986982, PubMed:23848398).</text>
</comment>
<comment type="catalytic activity">
    <reaction evidence="1 2 3">
        <text>3-deoxy-D-glycero-beta-D-galacto-non-2-ulopyranosonate 9-phosphate + H2O = 3-deoxy-D-glycero-beta-D-galacto-non-2-ulopyranosonate + phosphate</text>
        <dbReference type="Rhea" id="RHEA:49216"/>
        <dbReference type="ChEBI" id="CHEBI:15377"/>
        <dbReference type="ChEBI" id="CHEBI:43474"/>
        <dbReference type="ChEBI" id="CHEBI:90987"/>
        <dbReference type="ChEBI" id="CHEBI:90988"/>
        <dbReference type="EC" id="3.1.3.103"/>
    </reaction>
</comment>
<comment type="cofactor">
    <cofactor evidence="2 3">
        <name>Mg(2+)</name>
        <dbReference type="ChEBI" id="CHEBI:18420"/>
    </cofactor>
    <text evidence="2 3">Binds 1 magnesium ion per subunit.</text>
</comment>
<comment type="biophysicochemical properties">
    <kinetics>
        <KM evidence="2">3.3 uM for magnesium ion</KM>
        <KM evidence="2">100 uM for 2-keto-3-deoxy-D-glycero-D-galacto-9-phosphonononic acid (KDN-9-P)</KM>
        <KM evidence="3">105 uM for 2-keto-3-deoxy-D-glycero-D-galacto-9-phosphonononic acid (KDN-9-P)</KM>
        <KM evidence="1">110 uM for 2-keto-3-deoxy-D-glycero-D-galacto-9-phosphonononic acid (KDN-9-P)</KM>
        <KM evidence="1">120 uM for N-acetylneuraminate-9-phosphate (Neu5NAc-9-P)</KM>
        <KM evidence="1">310 uM for 2-keto-3-deoxy-D-manno-octulosonate-8-phosphate (KDO-8-P)</KM>
        <KM evidence="3">430 uM for 2-keto-3-deoxy-D-manno-octulosonate-8-phosphate (KDO-8-P)</KM>
        <text evidence="1 2">kcat is 72 min(-1) for 2-keto-3-deoxy-D-glycero-D-galacto-9-phosphonononic acid (KDN-9-P) as substrate (PubMed:18804026). kcat is 44 min(-1) for N-acetylneuraminate-9-phosphate (Neu5NAc-9-P) as substrate (PubMed:18804026). kcat is 3.8 min(-1) for 2-keto-3-deoxy-D-manno-octulosonate-8-phosphate (KDO-8-P) as substrate (PubMed:18804026). kcat is 1.2 sec(-1) for 2-keto-3-deoxy-D-glycero-D-galacto-9-phosphonononic acid (KDN-9-P) as substrate (PubMed:18986982).</text>
    </kinetics>
</comment>
<comment type="subunit">
    <text evidence="2 3">Homotetramer.</text>
</comment>
<comment type="similarity">
    <text evidence="6">Belongs to the KdsC family.</text>
</comment>